<accession>A1UBY0</accession>
<organism>
    <name type="scientific">Mycobacterium sp. (strain KMS)</name>
    <dbReference type="NCBI Taxonomy" id="189918"/>
    <lineage>
        <taxon>Bacteria</taxon>
        <taxon>Bacillati</taxon>
        <taxon>Actinomycetota</taxon>
        <taxon>Actinomycetes</taxon>
        <taxon>Mycobacteriales</taxon>
        <taxon>Mycobacteriaceae</taxon>
        <taxon>Mycobacterium</taxon>
    </lineage>
</organism>
<reference key="1">
    <citation type="submission" date="2006-12" db="EMBL/GenBank/DDBJ databases">
        <title>Complete sequence of chromosome of Mycobacterium sp. KMS.</title>
        <authorList>
            <consortium name="US DOE Joint Genome Institute"/>
            <person name="Copeland A."/>
            <person name="Lucas S."/>
            <person name="Lapidus A."/>
            <person name="Barry K."/>
            <person name="Detter J.C."/>
            <person name="Glavina del Rio T."/>
            <person name="Hammon N."/>
            <person name="Israni S."/>
            <person name="Dalin E."/>
            <person name="Tice H."/>
            <person name="Pitluck S."/>
            <person name="Kiss H."/>
            <person name="Brettin T."/>
            <person name="Bruce D."/>
            <person name="Han C."/>
            <person name="Tapia R."/>
            <person name="Gilna P."/>
            <person name="Schmutz J."/>
            <person name="Larimer F."/>
            <person name="Land M."/>
            <person name="Hauser L."/>
            <person name="Kyrpides N."/>
            <person name="Mikhailova N."/>
            <person name="Miller C.D."/>
            <person name="Richardson P."/>
        </authorList>
    </citation>
    <scope>NUCLEOTIDE SEQUENCE [LARGE SCALE GENOMIC DNA]</scope>
    <source>
        <strain>KMS</strain>
    </source>
</reference>
<keyword id="KW-0963">Cytoplasm</keyword>
<keyword id="KW-0396">Initiation factor</keyword>
<keyword id="KW-0648">Protein biosynthesis</keyword>
<keyword id="KW-0694">RNA-binding</keyword>
<keyword id="KW-0699">rRNA-binding</keyword>
<dbReference type="EMBL" id="CP000518">
    <property type="protein sequence ID" value="ABL90338.1"/>
    <property type="molecule type" value="Genomic_DNA"/>
</dbReference>
<dbReference type="SMR" id="A1UBY0"/>
<dbReference type="STRING" id="189918.Mkms_1125"/>
<dbReference type="KEGG" id="mkm:Mkms_1125"/>
<dbReference type="HOGENOM" id="CLU_151267_1_0_11"/>
<dbReference type="OrthoDB" id="9803250at2"/>
<dbReference type="GO" id="GO:0005829">
    <property type="term" value="C:cytosol"/>
    <property type="evidence" value="ECO:0007669"/>
    <property type="project" value="TreeGrafter"/>
</dbReference>
<dbReference type="GO" id="GO:0043022">
    <property type="term" value="F:ribosome binding"/>
    <property type="evidence" value="ECO:0007669"/>
    <property type="project" value="UniProtKB-UniRule"/>
</dbReference>
<dbReference type="GO" id="GO:0019843">
    <property type="term" value="F:rRNA binding"/>
    <property type="evidence" value="ECO:0007669"/>
    <property type="project" value="UniProtKB-UniRule"/>
</dbReference>
<dbReference type="GO" id="GO:0003743">
    <property type="term" value="F:translation initiation factor activity"/>
    <property type="evidence" value="ECO:0007669"/>
    <property type="project" value="UniProtKB-UniRule"/>
</dbReference>
<dbReference type="CDD" id="cd04451">
    <property type="entry name" value="S1_IF1"/>
    <property type="match status" value="1"/>
</dbReference>
<dbReference type="FunFam" id="2.40.50.140:FF:000002">
    <property type="entry name" value="Translation initiation factor IF-1"/>
    <property type="match status" value="1"/>
</dbReference>
<dbReference type="Gene3D" id="2.40.50.140">
    <property type="entry name" value="Nucleic acid-binding proteins"/>
    <property type="match status" value="1"/>
</dbReference>
<dbReference type="HAMAP" id="MF_00075">
    <property type="entry name" value="IF_1"/>
    <property type="match status" value="1"/>
</dbReference>
<dbReference type="InterPro" id="IPR012340">
    <property type="entry name" value="NA-bd_OB-fold"/>
</dbReference>
<dbReference type="InterPro" id="IPR006196">
    <property type="entry name" value="RNA-binding_domain_S1_IF1"/>
</dbReference>
<dbReference type="InterPro" id="IPR004368">
    <property type="entry name" value="TIF_IF1"/>
</dbReference>
<dbReference type="NCBIfam" id="TIGR00008">
    <property type="entry name" value="infA"/>
    <property type="match status" value="1"/>
</dbReference>
<dbReference type="PANTHER" id="PTHR33370">
    <property type="entry name" value="TRANSLATION INITIATION FACTOR IF-1, CHLOROPLASTIC"/>
    <property type="match status" value="1"/>
</dbReference>
<dbReference type="PANTHER" id="PTHR33370:SF1">
    <property type="entry name" value="TRANSLATION INITIATION FACTOR IF-1, CHLOROPLASTIC"/>
    <property type="match status" value="1"/>
</dbReference>
<dbReference type="Pfam" id="PF01176">
    <property type="entry name" value="eIF-1a"/>
    <property type="match status" value="1"/>
</dbReference>
<dbReference type="SUPFAM" id="SSF50249">
    <property type="entry name" value="Nucleic acid-binding proteins"/>
    <property type="match status" value="1"/>
</dbReference>
<dbReference type="PROSITE" id="PS50832">
    <property type="entry name" value="S1_IF1_TYPE"/>
    <property type="match status" value="1"/>
</dbReference>
<comment type="function">
    <text evidence="1">One of the essential components for the initiation of protein synthesis. Stabilizes the binding of IF-2 and IF-3 on the 30S subunit to which N-formylmethionyl-tRNA(fMet) subsequently binds. Helps modulate mRNA selection, yielding the 30S pre-initiation complex (PIC). Upon addition of the 50S ribosomal subunit IF-1, IF-2 and IF-3 are released leaving the mature 70S translation initiation complex.</text>
</comment>
<comment type="subunit">
    <text evidence="1">Component of the 30S ribosomal translation pre-initiation complex which assembles on the 30S ribosome in the order IF-2 and IF-3, IF-1 and N-formylmethionyl-tRNA(fMet); mRNA recruitment can occur at any time during PIC assembly.</text>
</comment>
<comment type="subcellular location">
    <subcellularLocation>
        <location evidence="1">Cytoplasm</location>
    </subcellularLocation>
</comment>
<comment type="similarity">
    <text evidence="1">Belongs to the IF-1 family.</text>
</comment>
<protein>
    <recommendedName>
        <fullName evidence="1">Translation initiation factor IF-1</fullName>
    </recommendedName>
</protein>
<evidence type="ECO:0000255" key="1">
    <source>
        <dbReference type="HAMAP-Rule" id="MF_00075"/>
    </source>
</evidence>
<proteinExistence type="inferred from homology"/>
<sequence>MAKKDGAIEVEGRVVEPLPNAMFRIELENGHKVLAHISGKMRQHYIRILPEDRVVVELSPYDLSRGRIVYRYK</sequence>
<name>IF1_MYCSK</name>
<gene>
    <name evidence="1" type="primary">infA</name>
    <name type="ordered locus">Mkms_1125</name>
</gene>
<feature type="chain" id="PRO_0000338864" description="Translation initiation factor IF-1">
    <location>
        <begin position="1"/>
        <end position="73"/>
    </location>
</feature>
<feature type="domain" description="S1-like" evidence="1">
    <location>
        <begin position="1"/>
        <end position="73"/>
    </location>
</feature>